<evidence type="ECO:0000255" key="1"/>
<evidence type="ECO:0000256" key="2">
    <source>
        <dbReference type="SAM" id="MobiDB-lite"/>
    </source>
</evidence>
<evidence type="ECO:0000269" key="3">
    <source>
    </source>
</evidence>
<evidence type="ECO:0000305" key="4"/>
<feature type="signal peptide" evidence="1">
    <location>
        <begin position="1"/>
        <end position="21"/>
    </location>
</feature>
<feature type="chain" id="PRO_0000247366" description="Uncharacterized protein L65">
    <location>
        <begin position="22"/>
        <end position="355"/>
    </location>
</feature>
<feature type="topological domain" description="Virion surface" evidence="1">
    <location>
        <begin position="22"/>
        <end position="331"/>
    </location>
</feature>
<feature type="transmembrane region" description="Helical" evidence="1">
    <location>
        <begin position="332"/>
        <end position="352"/>
    </location>
</feature>
<feature type="topological domain" description="Intravirion" evidence="1">
    <location>
        <begin position="353"/>
        <end position="355"/>
    </location>
</feature>
<feature type="region of interest" description="Disordered" evidence="2">
    <location>
        <begin position="288"/>
        <end position="317"/>
    </location>
</feature>
<feature type="compositionally biased region" description="Pro residues" evidence="2">
    <location>
        <begin position="296"/>
        <end position="317"/>
    </location>
</feature>
<feature type="glycosylation site" description="N-linked (GlcNAc...) asparagine; by host" evidence="1">
    <location>
        <position position="20"/>
    </location>
</feature>
<feature type="glycosylation site" description="N-linked (GlcNAc...) asparagine; by host" evidence="1">
    <location>
        <position position="78"/>
    </location>
</feature>
<feature type="glycosylation site" description="N-linked (GlcNAc...) asparagine; by host" evidence="1">
    <location>
        <position position="87"/>
    </location>
</feature>
<feature type="glycosylation site" description="N-linked (GlcNAc...) asparagine; by host" evidence="1">
    <location>
        <position position="156"/>
    </location>
</feature>
<feature type="glycosylation site" description="N-linked (GlcNAc...) asparagine; by host" evidence="1">
    <location>
        <position position="159"/>
    </location>
</feature>
<feature type="glycosylation site" description="N-linked (GlcNAc...) asparagine; by host" evidence="1">
    <location>
        <position position="274"/>
    </location>
</feature>
<feature type="glycosylation site" description="N-linked (GlcNAc...) asparagine; by host" evidence="1">
    <location>
        <position position="320"/>
    </location>
</feature>
<gene>
    <name type="ordered locus">MIMI_L65</name>
</gene>
<organism>
    <name type="scientific">Acanthamoeba polyphaga mimivirus</name>
    <name type="common">APMV</name>
    <dbReference type="NCBI Taxonomy" id="212035"/>
    <lineage>
        <taxon>Viruses</taxon>
        <taxon>Varidnaviria</taxon>
        <taxon>Bamfordvirae</taxon>
        <taxon>Nucleocytoviricota</taxon>
        <taxon>Megaviricetes</taxon>
        <taxon>Imitervirales</taxon>
        <taxon>Mimiviridae</taxon>
        <taxon>Megamimivirinae</taxon>
        <taxon>Mimivirus</taxon>
        <taxon>Mimivirus bradfordmassiliense</taxon>
    </lineage>
</organism>
<organismHost>
    <name type="scientific">Acanthamoeba polyphaga</name>
    <name type="common">Amoeba</name>
    <dbReference type="NCBI Taxonomy" id="5757"/>
</organismHost>
<accession>Q5UPE0</accession>
<keyword id="KW-0325">Glycoprotein</keyword>
<keyword id="KW-1043">Host membrane</keyword>
<keyword id="KW-0472">Membrane</keyword>
<keyword id="KW-1185">Reference proteome</keyword>
<keyword id="KW-0732">Signal</keyword>
<keyword id="KW-0812">Transmembrane</keyword>
<keyword id="KW-1133">Transmembrane helix</keyword>
<keyword id="KW-0946">Virion</keyword>
<name>YL065_MIMIV</name>
<protein>
    <recommendedName>
        <fullName>Uncharacterized protein L65</fullName>
    </recommendedName>
</protein>
<dbReference type="EMBL" id="AY653733">
    <property type="protein sequence ID" value="AAV50340.1"/>
    <property type="molecule type" value="Genomic_DNA"/>
</dbReference>
<dbReference type="KEGG" id="vg:9924657"/>
<dbReference type="OrthoDB" id="10307at10239"/>
<dbReference type="Proteomes" id="UP000001134">
    <property type="component" value="Genome"/>
</dbReference>
<dbReference type="GO" id="GO:0033644">
    <property type="term" value="C:host cell membrane"/>
    <property type="evidence" value="ECO:0007669"/>
    <property type="project" value="UniProtKB-SubCell"/>
</dbReference>
<dbReference type="GO" id="GO:0016020">
    <property type="term" value="C:membrane"/>
    <property type="evidence" value="ECO:0007669"/>
    <property type="project" value="UniProtKB-KW"/>
</dbReference>
<dbReference type="GO" id="GO:0044423">
    <property type="term" value="C:virion component"/>
    <property type="evidence" value="ECO:0007669"/>
    <property type="project" value="UniProtKB-KW"/>
</dbReference>
<dbReference type="InterPro" id="IPR004251">
    <property type="entry name" value="Pox_virus_G9/A16"/>
</dbReference>
<dbReference type="Pfam" id="PF03003">
    <property type="entry name" value="Pox_G9-A16"/>
    <property type="match status" value="1"/>
</dbReference>
<sequence>MQKKVLFNDIVFVCFPITDNGSIIISDIGYSDDGYNRPTGRQGTIENGDPYRITVPAGYSYTNKNVQNGNMIRLVRVNDSKNGCWYNGSGDGWLEIRDYVGPDWRADWTVQIINPANNDNSLYYGQHFRLMNRAQVENPTFQGPSDFASIALWGSNNTNNSVMMLLNGPLDTAKLECCKDNPIFTQPDYCANYRGTTCSGQCDDILSNYCAQVTTTDPKCGCLLPASFYTQNSAIGPPECIDDRCVDTNSYRKSTQCHPNCQIVDCDININDFNGTNINKIVYEQECGSKSTPNGPNGPTPTPSNGPNGPTPVPGIPPANGSSTSFFSRYGLWIIIAIILLIVIISAVGIYFYLR</sequence>
<comment type="subcellular location">
    <subcellularLocation>
        <location evidence="4">Host membrane</location>
        <topology evidence="4">Single-pass type I membrane protein</topology>
    </subcellularLocation>
    <subcellularLocation>
        <location evidence="3">Virion</location>
    </subcellularLocation>
</comment>
<proteinExistence type="evidence at protein level"/>
<reference key="1">
    <citation type="journal article" date="2004" name="Science">
        <title>The 1.2-megabase genome sequence of Mimivirus.</title>
        <authorList>
            <person name="Raoult D."/>
            <person name="Audic S."/>
            <person name="Robert C."/>
            <person name="Abergel C."/>
            <person name="Renesto P."/>
            <person name="Ogata H."/>
            <person name="La Scola B."/>
            <person name="Susan M."/>
            <person name="Claverie J.-M."/>
        </authorList>
    </citation>
    <scope>NUCLEOTIDE SEQUENCE [LARGE SCALE GENOMIC DNA]</scope>
    <source>
        <strain>Rowbotham-Bradford</strain>
    </source>
</reference>
<reference key="2">
    <citation type="journal article" date="2006" name="J. Virol.">
        <title>Mimivirus giant particles incorporate a large fraction of anonymous and unique gene products.</title>
        <authorList>
            <person name="Renesto P."/>
            <person name="Abergel C."/>
            <person name="Decloquement P."/>
            <person name="Moinier D."/>
            <person name="Azza S."/>
            <person name="Ogata H."/>
            <person name="Fourquet P."/>
            <person name="Gorvel J.-P."/>
            <person name="Claverie J.-M."/>
            <person name="Raoult D."/>
        </authorList>
    </citation>
    <scope>IDENTIFICATION BY MASS SPECTROMETRY [LARGE SCALE ANALYSIS]</scope>
    <scope>SUBCELLULAR LOCATION</scope>
</reference>